<reference key="1">
    <citation type="journal article" date="2002" name="Proc. Natl. Acad. Sci. U.S.A.">
        <title>The complete genome of hyperthermophile Methanopyrus kandleri AV19 and monophyly of archaeal methanogens.</title>
        <authorList>
            <person name="Slesarev A.I."/>
            <person name="Mezhevaya K.V."/>
            <person name="Makarova K.S."/>
            <person name="Polushin N.N."/>
            <person name="Shcherbinina O.V."/>
            <person name="Shakhova V.V."/>
            <person name="Belova G.I."/>
            <person name="Aravind L."/>
            <person name="Natale D.A."/>
            <person name="Rogozin I.B."/>
            <person name="Tatusov R.L."/>
            <person name="Wolf Y.I."/>
            <person name="Stetter K.O."/>
            <person name="Malykh A.G."/>
            <person name="Koonin E.V."/>
            <person name="Kozyavkin S.A."/>
        </authorList>
    </citation>
    <scope>NUCLEOTIDE SEQUENCE [LARGE SCALE GENOMIC DNA]</scope>
    <source>
        <strain>AV19 / DSM 6324 / JCM 9639 / NBRC 100938</strain>
    </source>
</reference>
<organism>
    <name type="scientific">Methanopyrus kandleri (strain AV19 / DSM 6324 / JCM 9639 / NBRC 100938)</name>
    <dbReference type="NCBI Taxonomy" id="190192"/>
    <lineage>
        <taxon>Archaea</taxon>
        <taxon>Methanobacteriati</taxon>
        <taxon>Methanobacteriota</taxon>
        <taxon>Methanomada group</taxon>
        <taxon>Methanopyri</taxon>
        <taxon>Methanopyrales</taxon>
        <taxon>Methanopyraceae</taxon>
        <taxon>Methanopyrus</taxon>
    </lineage>
</organism>
<accession>Q8TX38</accession>
<keyword id="KW-0238">DNA-binding</keyword>
<keyword id="KW-1185">Reference proteome</keyword>
<keyword id="KW-0677">Repeat</keyword>
<keyword id="KW-0804">Transcription</keyword>
<keyword id="KW-0805">Transcription regulation</keyword>
<sequence>MEIQNIVASVDLKGEVNLDECSVILQGEYEPEQFPGLVYRLEDIGTVVLIFRSGKMVCTGAKNREQIYKSVERVREDLEKKCGVKFHGEPEVEIQNIVASIDFHVPLDLDTIAEVLVGDEDVEGIEYEPEQFPGLVLRLREPKVAMLLFYSGKAVCTGAKTEEEPEKAVKKIAEKIEKYGLKLTG</sequence>
<comment type="function">
    <text evidence="1">General factor that plays a role in the activation of archaeal genes transcribed by RNA polymerase. Binds specifically to the TATA box promoter element which lies close to the position of transcription initiation.</text>
</comment>
<comment type="similarity">
    <text evidence="1">Belongs to the TBP family.</text>
</comment>
<proteinExistence type="inferred from homology"/>
<dbReference type="EMBL" id="AE009439">
    <property type="protein sequence ID" value="AAM02052.1"/>
    <property type="molecule type" value="Genomic_DNA"/>
</dbReference>
<dbReference type="SMR" id="Q8TX38"/>
<dbReference type="FunCoup" id="Q8TX38">
    <property type="interactions" value="139"/>
</dbReference>
<dbReference type="STRING" id="190192.MK0839"/>
<dbReference type="PaxDb" id="190192-MK0839"/>
<dbReference type="EnsemblBacteria" id="AAM02052">
    <property type="protein sequence ID" value="AAM02052"/>
    <property type="gene ID" value="MK0839"/>
</dbReference>
<dbReference type="KEGG" id="mka:MK0839"/>
<dbReference type="PATRIC" id="fig|190192.8.peg.882"/>
<dbReference type="HOGENOM" id="CLU_060161_4_3_2"/>
<dbReference type="InParanoid" id="Q8TX38"/>
<dbReference type="Proteomes" id="UP000001826">
    <property type="component" value="Chromosome"/>
</dbReference>
<dbReference type="GO" id="GO:0003677">
    <property type="term" value="F:DNA binding"/>
    <property type="evidence" value="ECO:0007669"/>
    <property type="project" value="UniProtKB-KW"/>
</dbReference>
<dbReference type="GO" id="GO:0003700">
    <property type="term" value="F:DNA-binding transcription factor activity"/>
    <property type="evidence" value="ECO:0007669"/>
    <property type="project" value="UniProtKB-UniRule"/>
</dbReference>
<dbReference type="GO" id="GO:0006352">
    <property type="term" value="P:DNA-templated transcription initiation"/>
    <property type="evidence" value="ECO:0007669"/>
    <property type="project" value="InterPro"/>
</dbReference>
<dbReference type="FunFam" id="3.30.310.10:FF:000007">
    <property type="entry name" value="TATA-box-binding protein"/>
    <property type="match status" value="1"/>
</dbReference>
<dbReference type="Gene3D" id="3.30.310.10">
    <property type="entry name" value="TATA-Binding Protein"/>
    <property type="match status" value="2"/>
</dbReference>
<dbReference type="HAMAP" id="MF_00408">
    <property type="entry name" value="TATA_bind_prot_arch"/>
    <property type="match status" value="1"/>
</dbReference>
<dbReference type="InterPro" id="IPR000814">
    <property type="entry name" value="TBP"/>
</dbReference>
<dbReference type="InterPro" id="IPR030491">
    <property type="entry name" value="TBP_CS"/>
</dbReference>
<dbReference type="InterPro" id="IPR012295">
    <property type="entry name" value="TBP_dom_sf"/>
</dbReference>
<dbReference type="NCBIfam" id="NF001597">
    <property type="entry name" value="PRK00394.2-2"/>
    <property type="match status" value="1"/>
</dbReference>
<dbReference type="PANTHER" id="PTHR10126">
    <property type="entry name" value="TATA-BOX BINDING PROTEIN"/>
    <property type="match status" value="1"/>
</dbReference>
<dbReference type="Pfam" id="PF00352">
    <property type="entry name" value="TBP"/>
    <property type="match status" value="2"/>
</dbReference>
<dbReference type="PRINTS" id="PR00686">
    <property type="entry name" value="TIFACTORIID"/>
</dbReference>
<dbReference type="SUPFAM" id="SSF55945">
    <property type="entry name" value="TATA-box binding protein-like"/>
    <property type="match status" value="2"/>
</dbReference>
<dbReference type="PROSITE" id="PS00351">
    <property type="entry name" value="TFIID"/>
    <property type="match status" value="1"/>
</dbReference>
<feature type="chain" id="PRO_0000154009" description="TATA-box-binding protein">
    <location>
        <begin position="1"/>
        <end position="185"/>
    </location>
</feature>
<feature type="repeat" description="1">
    <location>
        <begin position="3"/>
        <end position="78"/>
    </location>
</feature>
<feature type="repeat" description="2">
    <location>
        <begin position="94"/>
        <end position="176"/>
    </location>
</feature>
<evidence type="ECO:0000255" key="1">
    <source>
        <dbReference type="HAMAP-Rule" id="MF_00408"/>
    </source>
</evidence>
<protein>
    <recommendedName>
        <fullName evidence="1">TATA-box-binding protein</fullName>
    </recommendedName>
    <alternativeName>
        <fullName evidence="1">Box A-binding protein</fullName>
        <shortName evidence="1">BAP</shortName>
    </alternativeName>
    <alternativeName>
        <fullName evidence="1">TATA sequence-binding protein</fullName>
        <shortName evidence="1">TBP</shortName>
    </alternativeName>
    <alternativeName>
        <fullName evidence="1">TATA-box factor</fullName>
    </alternativeName>
</protein>
<name>TBP_METKA</name>
<gene>
    <name evidence="1" type="primary">tbp</name>
    <name type="ordered locus">MK0839</name>
</gene>